<reference evidence="4 5" key="1">
    <citation type="journal article" date="2006" name="J. Cell Biol.">
        <title>Identification of novel chondroitin proteoglycans in Caenorhabditis elegans: embryonic cell division depends on CPG-1 and CPG-2.</title>
        <authorList>
            <person name="Olson S.K."/>
            <person name="Bishop J.R."/>
            <person name="Yates J.R."/>
            <person name="Oegema K."/>
            <person name="Esko J.D."/>
        </authorList>
    </citation>
    <scope>NUCLEOTIDE SEQUENCE [MRNA]</scope>
    <scope>IDENTIFICATION BY MASS SPECTROMETRY</scope>
    <scope>GLYCOSYLATION AT SER-68; SER-72; SER-76; SER-84 AND SER-88</scope>
</reference>
<reference key="2">
    <citation type="journal article" date="1998" name="Science">
        <title>Genome sequence of the nematode C. elegans: a platform for investigating biology.</title>
        <authorList>
            <consortium name="The C. elegans sequencing consortium"/>
        </authorList>
    </citation>
    <scope>NUCLEOTIDE SEQUENCE [LARGE SCALE GENOMIC DNA]</scope>
    <source>
        <strain>Bristol N2</strain>
    </source>
</reference>
<proteinExistence type="evidence at protein level"/>
<protein>
    <recommendedName>
        <fullName>Chondroitin proteoglycan 7</fullName>
    </recommendedName>
</protein>
<name>CPG7_CAEEL</name>
<gene>
    <name evidence="6 7" type="primary">cpg-7</name>
    <name type="ORF">K09E4.6</name>
</gene>
<keyword id="KW-0325">Glycoprotein</keyword>
<keyword id="KW-0654">Proteoglycan</keyword>
<keyword id="KW-1185">Reference proteome</keyword>
<keyword id="KW-0732">Signal</keyword>
<feature type="signal peptide" evidence="1">
    <location>
        <begin position="1"/>
        <end position="19"/>
    </location>
</feature>
<feature type="chain" id="PRO_0000320226" description="Chondroitin proteoglycan 7">
    <location>
        <begin position="20"/>
        <end position="116"/>
    </location>
</feature>
<feature type="region of interest" description="Disordered" evidence="2">
    <location>
        <begin position="29"/>
        <end position="102"/>
    </location>
</feature>
<feature type="compositionally biased region" description="Low complexity" evidence="2">
    <location>
        <begin position="32"/>
        <end position="41"/>
    </location>
</feature>
<feature type="compositionally biased region" description="Low complexity" evidence="2">
    <location>
        <begin position="48"/>
        <end position="58"/>
    </location>
</feature>
<feature type="glycosylation site" description="O-linked (Xyl...) (chondroitin sulfate) serine" evidence="3">
    <location>
        <position position="68"/>
    </location>
</feature>
<feature type="glycosylation site" description="O-linked (Xyl...) (chondroitin sulfate) serine" evidence="3">
    <location>
        <position position="72"/>
    </location>
</feature>
<feature type="glycosylation site" description="O-linked (Xyl...) (chondroitin sulfate) serine" evidence="3">
    <location>
        <position position="76"/>
    </location>
</feature>
<feature type="glycosylation site" description="O-linked (Xyl...) (chondroitin sulfate) serine" evidence="3">
    <location>
        <position position="84"/>
    </location>
</feature>
<feature type="glycosylation site" description="O-linked (Xyl...) (chondroitin sulfate) serine" evidence="3">
    <location>
        <position position="88"/>
    </location>
</feature>
<sequence length="116" mass="11530">MQTITILALIACVAVPIFADFDHLRARRDVVESSGEGSGESSGEKPVVESSGEGSGESSGDKEAVEASGEGSGEGSGDATLESSGEGSGESHNAVVASDSPKDVKALTANEFAVSV</sequence>
<evidence type="ECO:0000255" key="1"/>
<evidence type="ECO:0000256" key="2">
    <source>
        <dbReference type="SAM" id="MobiDB-lite"/>
    </source>
</evidence>
<evidence type="ECO:0000269" key="3">
    <source>
    </source>
</evidence>
<evidence type="ECO:0000305" key="4"/>
<evidence type="ECO:0000312" key="5">
    <source>
        <dbReference type="EMBL" id="ABC65817.1"/>
    </source>
</evidence>
<evidence type="ECO:0000312" key="6">
    <source>
        <dbReference type="EMBL" id="CAE17873.1"/>
    </source>
</evidence>
<evidence type="ECO:0000312" key="7">
    <source>
        <dbReference type="WormBase" id="K09E4.6"/>
    </source>
</evidence>
<dbReference type="EMBL" id="DQ340629">
    <property type="protein sequence ID" value="ABC65817.1"/>
    <property type="molecule type" value="mRNA"/>
</dbReference>
<dbReference type="EMBL" id="Z83234">
    <property type="protein sequence ID" value="CAE17873.1"/>
    <property type="molecule type" value="Genomic_DNA"/>
</dbReference>
<dbReference type="RefSeq" id="NP_001022243.1">
    <property type="nucleotide sequence ID" value="NM_001027072.5"/>
</dbReference>
<dbReference type="SMR" id="Q7YWX9"/>
<dbReference type="FunCoup" id="Q7YWX9">
    <property type="interactions" value="1524"/>
</dbReference>
<dbReference type="STRING" id="6239.K09E4.6.1"/>
<dbReference type="GlyCosmos" id="Q7YWX9">
    <property type="glycosylation" value="5 sites, No reported glycans"/>
</dbReference>
<dbReference type="iPTMnet" id="Q7YWX9"/>
<dbReference type="PaxDb" id="6239-K09E4.6"/>
<dbReference type="PeptideAtlas" id="Q7YWX9"/>
<dbReference type="EnsemblMetazoa" id="K09E4.6.1">
    <property type="protein sequence ID" value="K09E4.6.1"/>
    <property type="gene ID" value="WBGene00010723"/>
</dbReference>
<dbReference type="GeneID" id="259477"/>
<dbReference type="KEGG" id="cel:CELE_K09E4.6"/>
<dbReference type="UCSC" id="K09E4.6">
    <property type="organism name" value="c. elegans"/>
</dbReference>
<dbReference type="AGR" id="WB:WBGene00010723"/>
<dbReference type="CTD" id="259477"/>
<dbReference type="WormBase" id="K09E4.6">
    <property type="protein sequence ID" value="CE34928"/>
    <property type="gene ID" value="WBGene00010723"/>
    <property type="gene designation" value="cpg-7"/>
</dbReference>
<dbReference type="eggNOG" id="ENOG502TEKE">
    <property type="taxonomic scope" value="Eukaryota"/>
</dbReference>
<dbReference type="HOGENOM" id="CLU_2099053_0_0_1"/>
<dbReference type="InParanoid" id="Q7YWX9"/>
<dbReference type="OMA" id="SWQWTES"/>
<dbReference type="PRO" id="PR:Q7YWX9"/>
<dbReference type="Proteomes" id="UP000001940">
    <property type="component" value="Chromosome II"/>
</dbReference>
<dbReference type="Bgee" id="WBGene00010723">
    <property type="expression patterns" value="Expressed in larva and 3 other cell types or tissues"/>
</dbReference>
<accession>Q7YWX9</accession>
<organism>
    <name type="scientific">Caenorhabditis elegans</name>
    <dbReference type="NCBI Taxonomy" id="6239"/>
    <lineage>
        <taxon>Eukaryota</taxon>
        <taxon>Metazoa</taxon>
        <taxon>Ecdysozoa</taxon>
        <taxon>Nematoda</taxon>
        <taxon>Chromadorea</taxon>
        <taxon>Rhabditida</taxon>
        <taxon>Rhabditina</taxon>
        <taxon>Rhabditomorpha</taxon>
        <taxon>Rhabditoidea</taxon>
        <taxon>Rhabditidae</taxon>
        <taxon>Peloderinae</taxon>
        <taxon>Caenorhabditis</taxon>
    </lineage>
</organism>